<organism>
    <name type="scientific">Xylella fastidiosa (strain 9a5c)</name>
    <dbReference type="NCBI Taxonomy" id="160492"/>
    <lineage>
        <taxon>Bacteria</taxon>
        <taxon>Pseudomonadati</taxon>
        <taxon>Pseudomonadota</taxon>
        <taxon>Gammaproteobacteria</taxon>
        <taxon>Lysobacterales</taxon>
        <taxon>Lysobacteraceae</taxon>
        <taxon>Xylella</taxon>
    </lineage>
</organism>
<feature type="chain" id="PRO_0000220061" description="Enoyl-[acyl-carrier-protein] reductase [NADH]">
    <location>
        <begin position="1"/>
        <end position="401"/>
    </location>
</feature>
<feature type="active site" description="Proton donor" evidence="1">
    <location>
        <position position="236"/>
    </location>
</feature>
<feature type="binding site" evidence="1">
    <location>
        <begin position="48"/>
        <end position="53"/>
    </location>
    <ligand>
        <name>NAD(+)</name>
        <dbReference type="ChEBI" id="CHEBI:57540"/>
    </ligand>
</feature>
<feature type="binding site" evidence="1">
    <location>
        <begin position="74"/>
        <end position="75"/>
    </location>
    <ligand>
        <name>NAD(+)</name>
        <dbReference type="ChEBI" id="CHEBI:57540"/>
    </ligand>
</feature>
<feature type="binding site" evidence="1">
    <location>
        <begin position="111"/>
        <end position="112"/>
    </location>
    <ligand>
        <name>NAD(+)</name>
        <dbReference type="ChEBI" id="CHEBI:57540"/>
    </ligand>
</feature>
<feature type="binding site" evidence="1">
    <location>
        <begin position="140"/>
        <end position="141"/>
    </location>
    <ligand>
        <name>NAD(+)</name>
        <dbReference type="ChEBI" id="CHEBI:57540"/>
    </ligand>
</feature>
<feature type="binding site" evidence="1">
    <location>
        <position position="226"/>
    </location>
    <ligand>
        <name>substrate</name>
    </ligand>
</feature>
<feature type="binding site" evidence="1">
    <location>
        <position position="245"/>
    </location>
    <ligand>
        <name>NAD(+)</name>
        <dbReference type="ChEBI" id="CHEBI:57540"/>
    </ligand>
</feature>
<feature type="binding site" evidence="1">
    <location>
        <begin position="274"/>
        <end position="276"/>
    </location>
    <ligand>
        <name>NAD(+)</name>
        <dbReference type="ChEBI" id="CHEBI:57540"/>
    </ligand>
</feature>
<feature type="site" description="Plays an important role in discriminating NADH against NADPH" evidence="1">
    <location>
        <position position="75"/>
    </location>
</feature>
<protein>
    <recommendedName>
        <fullName evidence="1">Enoyl-[acyl-carrier-protein] reductase [NADH]</fullName>
        <shortName evidence="1">ENR</shortName>
        <ecNumber evidence="1">1.3.1.9</ecNumber>
    </recommendedName>
</protein>
<evidence type="ECO:0000255" key="1">
    <source>
        <dbReference type="HAMAP-Rule" id="MF_01838"/>
    </source>
</evidence>
<evidence type="ECO:0000305" key="2"/>
<comment type="function">
    <text evidence="1">Involved in the final reduction of the elongation cycle of fatty acid synthesis (FAS II). Catalyzes the reduction of a carbon-carbon double bond in an enoyl moiety that is covalently linked to an acyl carrier protein (ACP).</text>
</comment>
<comment type="catalytic activity">
    <reaction evidence="1">
        <text>a 2,3-saturated acyl-[ACP] + NAD(+) = a (2E)-enoyl-[ACP] + NADH + H(+)</text>
        <dbReference type="Rhea" id="RHEA:10240"/>
        <dbReference type="Rhea" id="RHEA-COMP:9925"/>
        <dbReference type="Rhea" id="RHEA-COMP:9926"/>
        <dbReference type="ChEBI" id="CHEBI:15378"/>
        <dbReference type="ChEBI" id="CHEBI:57540"/>
        <dbReference type="ChEBI" id="CHEBI:57945"/>
        <dbReference type="ChEBI" id="CHEBI:78784"/>
        <dbReference type="ChEBI" id="CHEBI:78785"/>
        <dbReference type="EC" id="1.3.1.9"/>
    </reaction>
</comment>
<comment type="pathway">
    <text evidence="1">Lipid metabolism; fatty acid biosynthesis.</text>
</comment>
<comment type="subunit">
    <text evidence="1">Monomer.</text>
</comment>
<comment type="similarity">
    <text evidence="1">Belongs to the TER reductase family.</text>
</comment>
<comment type="sequence caution" evidence="2">
    <conflict type="erroneous initiation">
        <sequence resource="EMBL-CDS" id="AAF84641"/>
    </conflict>
    <text>Extended N-terminus.</text>
</comment>
<gene>
    <name evidence="1" type="primary">fabV</name>
    <name type="ordered locus">XF_1835</name>
</gene>
<accession>Q9PCE6</accession>
<sequence>MIIHPKTRGFICTTTHPVGCEYNVLEQIQSTRARGVRSNGPKKVLVIGASSGYGLATRISAAFGFGADTLGVFFEKPGTEKKPGTAGWYNAAAFDKSAKNAGLYSRSINGDAFSDEMRAKVIEIIKSEMGGHVDLVVYSLASPLRKMPSTGEIKRSVLKPIGVAHISNAIDTNKDQIIQATVEPATEQEIADTVAVMGGQDWELWINALTQADVLAPQTRTVAFSYIGTEITWPIYWHGALGKAKADLDATSRRLDARLQALGGGANVAVLKSVVTQASAAIPALPLYIAIVFKVMKEKGLHEGTIEQADRLLRERLYREDGQPAAVDEEHRLRLDDWELREDVQATCKVIWKQVTNENLFQLTDYANYKRDFLKLFGFERADVDYDADVNPEVTFDVIEL</sequence>
<reference key="1">
    <citation type="journal article" date="2000" name="Nature">
        <title>The genome sequence of the plant pathogen Xylella fastidiosa.</title>
        <authorList>
            <person name="Simpson A.J.G."/>
            <person name="Reinach F.C."/>
            <person name="Arruda P."/>
            <person name="Abreu F.A."/>
            <person name="Acencio M."/>
            <person name="Alvarenga R."/>
            <person name="Alves L.M.C."/>
            <person name="Araya J.E."/>
            <person name="Baia G.S."/>
            <person name="Baptista C.S."/>
            <person name="Barros M.H."/>
            <person name="Bonaccorsi E.D."/>
            <person name="Bordin S."/>
            <person name="Bove J.M."/>
            <person name="Briones M.R.S."/>
            <person name="Bueno M.R.P."/>
            <person name="Camargo A.A."/>
            <person name="Camargo L.E.A."/>
            <person name="Carraro D.M."/>
            <person name="Carrer H."/>
            <person name="Colauto N.B."/>
            <person name="Colombo C."/>
            <person name="Costa F.F."/>
            <person name="Costa M.C.R."/>
            <person name="Costa-Neto C.M."/>
            <person name="Coutinho L.L."/>
            <person name="Cristofani M."/>
            <person name="Dias-Neto E."/>
            <person name="Docena C."/>
            <person name="El-Dorry H."/>
            <person name="Facincani A.P."/>
            <person name="Ferreira A.J.S."/>
            <person name="Ferreira V.C.A."/>
            <person name="Ferro J.A."/>
            <person name="Fraga J.S."/>
            <person name="Franca S.C."/>
            <person name="Franco M.C."/>
            <person name="Frohme M."/>
            <person name="Furlan L.R."/>
            <person name="Garnier M."/>
            <person name="Goldman G.H."/>
            <person name="Goldman M.H.S."/>
            <person name="Gomes S.L."/>
            <person name="Gruber A."/>
            <person name="Ho P.L."/>
            <person name="Hoheisel J.D."/>
            <person name="Junqueira M.L."/>
            <person name="Kemper E.L."/>
            <person name="Kitajima J.P."/>
            <person name="Krieger J.E."/>
            <person name="Kuramae E.E."/>
            <person name="Laigret F."/>
            <person name="Lambais M.R."/>
            <person name="Leite L.C.C."/>
            <person name="Lemos E.G.M."/>
            <person name="Lemos M.V.F."/>
            <person name="Lopes S.A."/>
            <person name="Lopes C.R."/>
            <person name="Machado J.A."/>
            <person name="Machado M.A."/>
            <person name="Madeira A.M.B.N."/>
            <person name="Madeira H.M.F."/>
            <person name="Marino C.L."/>
            <person name="Marques M.V."/>
            <person name="Martins E.A.L."/>
            <person name="Martins E.M.F."/>
            <person name="Matsukuma A.Y."/>
            <person name="Menck C.F.M."/>
            <person name="Miracca E.C."/>
            <person name="Miyaki C.Y."/>
            <person name="Monteiro-Vitorello C.B."/>
            <person name="Moon D.H."/>
            <person name="Nagai M.A."/>
            <person name="Nascimento A.L.T.O."/>
            <person name="Netto L.E.S."/>
            <person name="Nhani A. Jr."/>
            <person name="Nobrega F.G."/>
            <person name="Nunes L.R."/>
            <person name="Oliveira M.A."/>
            <person name="de Oliveira M.C."/>
            <person name="de Oliveira R.C."/>
            <person name="Palmieri D.A."/>
            <person name="Paris A."/>
            <person name="Peixoto B.R."/>
            <person name="Pereira G.A.G."/>
            <person name="Pereira H.A. Jr."/>
            <person name="Pesquero J.B."/>
            <person name="Quaggio R.B."/>
            <person name="Roberto P.G."/>
            <person name="Rodrigues V."/>
            <person name="de Rosa A.J.M."/>
            <person name="de Rosa V.E. Jr."/>
            <person name="de Sa R.G."/>
            <person name="Santelli R.V."/>
            <person name="Sawasaki H.E."/>
            <person name="da Silva A.C.R."/>
            <person name="da Silva A.M."/>
            <person name="da Silva F.R."/>
            <person name="Silva W.A. Jr."/>
            <person name="da Silveira J.F."/>
            <person name="Silvestri M.L.Z."/>
            <person name="Siqueira W.J."/>
            <person name="de Souza A.A."/>
            <person name="de Souza A.P."/>
            <person name="Terenzi M.F."/>
            <person name="Truffi D."/>
            <person name="Tsai S.M."/>
            <person name="Tsuhako M.H."/>
            <person name="Vallada H."/>
            <person name="Van Sluys M.A."/>
            <person name="Verjovski-Almeida S."/>
            <person name="Vettore A.L."/>
            <person name="Zago M.A."/>
            <person name="Zatz M."/>
            <person name="Meidanis J."/>
            <person name="Setubal J.C."/>
        </authorList>
    </citation>
    <scope>NUCLEOTIDE SEQUENCE [LARGE SCALE GENOMIC DNA]</scope>
    <source>
        <strain>9a5c</strain>
    </source>
</reference>
<proteinExistence type="inferred from homology"/>
<dbReference type="EC" id="1.3.1.9" evidence="1"/>
<dbReference type="EMBL" id="AE003849">
    <property type="protein sequence ID" value="AAF84641.1"/>
    <property type="status" value="ALT_INIT"/>
    <property type="molecule type" value="Genomic_DNA"/>
</dbReference>
<dbReference type="PIR" id="H82630">
    <property type="entry name" value="H82630"/>
</dbReference>
<dbReference type="RefSeq" id="WP_010894301.1">
    <property type="nucleotide sequence ID" value="NC_002488.3"/>
</dbReference>
<dbReference type="SMR" id="Q9PCE6"/>
<dbReference type="STRING" id="160492.XF_1835"/>
<dbReference type="KEGG" id="xfa:XF_1835"/>
<dbReference type="eggNOG" id="COG3007">
    <property type="taxonomic scope" value="Bacteria"/>
</dbReference>
<dbReference type="HOGENOM" id="CLU_057698_1_0_6"/>
<dbReference type="UniPathway" id="UPA00094"/>
<dbReference type="Proteomes" id="UP000000812">
    <property type="component" value="Chromosome"/>
</dbReference>
<dbReference type="GO" id="GO:0004318">
    <property type="term" value="F:enoyl-[acyl-carrier-protein] reductase (NADH) activity"/>
    <property type="evidence" value="ECO:0007669"/>
    <property type="project" value="UniProtKB-UniRule"/>
</dbReference>
<dbReference type="GO" id="GO:0051287">
    <property type="term" value="F:NAD binding"/>
    <property type="evidence" value="ECO:0007669"/>
    <property type="project" value="UniProtKB-UniRule"/>
</dbReference>
<dbReference type="GO" id="GO:0050343">
    <property type="term" value="F:trans-2-enoyl-CoA reductase (NADH) activity"/>
    <property type="evidence" value="ECO:0007669"/>
    <property type="project" value="TreeGrafter"/>
</dbReference>
<dbReference type="GO" id="GO:0006633">
    <property type="term" value="P:fatty acid biosynthetic process"/>
    <property type="evidence" value="ECO:0007669"/>
    <property type="project" value="UniProtKB-UniRule"/>
</dbReference>
<dbReference type="FunFam" id="3.40.50.720:FF:000221">
    <property type="entry name" value="Enoyl-[acyl-carrier-protein] reductase [NADH]"/>
    <property type="match status" value="1"/>
</dbReference>
<dbReference type="Gene3D" id="3.40.50.720">
    <property type="entry name" value="NAD(P)-binding Rossmann-like Domain"/>
    <property type="match status" value="1"/>
</dbReference>
<dbReference type="HAMAP" id="MF_01838">
    <property type="entry name" value="FabV_reductase"/>
    <property type="match status" value="1"/>
</dbReference>
<dbReference type="InterPro" id="IPR024906">
    <property type="entry name" value="Eno_Rdtase_FAD-bd_dom"/>
</dbReference>
<dbReference type="InterPro" id="IPR024910">
    <property type="entry name" value="Enoyl-CoA_Rdtase_cat_dom"/>
</dbReference>
<dbReference type="InterPro" id="IPR050048">
    <property type="entry name" value="FabV-like_NADH_b"/>
</dbReference>
<dbReference type="InterPro" id="IPR010758">
    <property type="entry name" value="Trans-2-enoyl-CoA_reductase"/>
</dbReference>
<dbReference type="NCBIfam" id="NF043048">
    <property type="entry name" value="EnoyACPredFabV"/>
    <property type="match status" value="1"/>
</dbReference>
<dbReference type="NCBIfam" id="NF010177">
    <property type="entry name" value="PRK13656.1"/>
    <property type="match status" value="1"/>
</dbReference>
<dbReference type="PANTHER" id="PTHR37480">
    <property type="entry name" value="ENOYL-[ACYL-CARRIER-PROTEIN] REDUCTASE [NADH]"/>
    <property type="match status" value="1"/>
</dbReference>
<dbReference type="PANTHER" id="PTHR37480:SF1">
    <property type="entry name" value="ENOYL-[ACYL-CARRIER-PROTEIN] REDUCTASE [NADH]"/>
    <property type="match status" value="1"/>
</dbReference>
<dbReference type="Pfam" id="PF07055">
    <property type="entry name" value="Eno-Rase_FAD_bd"/>
    <property type="match status" value="1"/>
</dbReference>
<dbReference type="Pfam" id="PF12242">
    <property type="entry name" value="Eno-Rase_NADH_b"/>
    <property type="match status" value="1"/>
</dbReference>
<dbReference type="Pfam" id="PF12241">
    <property type="entry name" value="Enoyl_reductase"/>
    <property type="match status" value="1"/>
</dbReference>
<name>FABV_XYLFA</name>
<keyword id="KW-0275">Fatty acid biosynthesis</keyword>
<keyword id="KW-0276">Fatty acid metabolism</keyword>
<keyword id="KW-0444">Lipid biosynthesis</keyword>
<keyword id="KW-0443">Lipid metabolism</keyword>
<keyword id="KW-0520">NAD</keyword>
<keyword id="KW-0560">Oxidoreductase</keyword>